<comment type="function">
    <text evidence="1 3">Zinc-sensing receptor that can sense changes in extracellular Zn(2+), mediate Zn(2+) signal transmission, and participates in the regulation of numerous physiological processes including glucose homeostasis regulation, gastrointestinal mobility, hormone secretion and cell death. Activation by Zn(2+) in keratinocytes increases the intracellular concentration of Ca(2+) and activates the ERK/MAPK and PI3K/AKT signaling pathways leading to epithelial repair (By similarity). Plays an essential role in normal wound healing by inducing the production of cytokines including the major inflammatory cytokine IL6 via the PKC/MAPK/CEBPB pathway (By similarity). Regulates adipose tissue metabolism, especially lipolysis, and regulates the function of lipases, such as hormone-sensitive lipase and adipose triglyceride lipase (By similarity). Plays a role in the inhibition of cell death and protects against oxidative, endoplasmic reticulum and mitochondrial stress by inducing secretion of the cytoprotective pigment epithelium-derived growth factor (PEDF) and probably other protective transcripts in a GNA13/RHOA/SRE-dependent manner. Forms dynamic heteroreceptor complexes with HTR1A and GALR1 depending on cell type or specific physiological states, resulting in signaling diversity: HTR1A-GPR39 shows additive increase in signaling along the serum response element (SRE) and NF-kappa-B pathways while GALR1 acts as an antagonist blocking SRE (By similarity).</text>
</comment>
<comment type="subunit">
    <text evidence="1">Interacts with HTR1A. Interacts with GALR1.</text>
</comment>
<comment type="subcellular location">
    <subcellularLocation>
        <location evidence="1">Cell membrane</location>
        <topology evidence="1">Multi-pass membrane protein</topology>
    </subcellularLocation>
</comment>
<comment type="tissue specificity">
    <text evidence="7">Detected in liver, kidney, abomasum, uterus, small intestine and colon.</text>
</comment>
<comment type="similarity">
    <text evidence="5">Belongs to the G-protein coupled receptor 1 family.</text>
</comment>
<gene>
    <name type="primary">GPR39</name>
</gene>
<reference key="1">
    <citation type="journal article" date="2009" name="J. Vet. Med. Sci.">
        <title>cDNA cloning and mRNA expression of bovine GPR39.</title>
        <authorList>
            <person name="Yamamoto I."/>
            <person name="Kimura N."/>
            <person name="Arai T."/>
            <person name="Tanaka M."/>
        </authorList>
    </citation>
    <scope>NUCLEOTIDE SEQUENCE [MRNA]</scope>
    <scope>TISSUE SPECIFICITY</scope>
    <source>
        <tissue>Duodenum</tissue>
    </source>
</reference>
<evidence type="ECO:0000250" key="1">
    <source>
        <dbReference type="UniProtKB" id="O43194"/>
    </source>
</evidence>
<evidence type="ECO:0000250" key="2">
    <source>
        <dbReference type="UniProtKB" id="P20789"/>
    </source>
</evidence>
<evidence type="ECO:0000250" key="3">
    <source>
        <dbReference type="UniProtKB" id="Q5U431"/>
    </source>
</evidence>
<evidence type="ECO:0000255" key="4"/>
<evidence type="ECO:0000255" key="5">
    <source>
        <dbReference type="PROSITE-ProRule" id="PRU00521"/>
    </source>
</evidence>
<evidence type="ECO:0000256" key="6">
    <source>
        <dbReference type="SAM" id="MobiDB-lite"/>
    </source>
</evidence>
<evidence type="ECO:0000269" key="7">
    <source>
    </source>
</evidence>
<sequence length="454" mass="51445">MASPSHPSRDCSQVIDHSHVPEFEVATWIKITLILVYLVIFVVGILGNSVTIRVTQVLQKKGYLQKEVTDHMVSLACSDILVFLIGMPMEFYSIIWNPLTTPSYTVSCKVHTFLFEACSYATLLHVLTLSFERYIAICHPFRYKAMSGPCQVKLLIGFVWVTSALVALPLLFAMGVEYPLVNVPSHRGLICNRSRTRHQEQPESSNMSICTNLSSRWTVFQSSIFSAFVVYLVVLVSVAFMCWSMMQVLRRSKQGTLAAQGQQLQLRKLESQESRSARRQTIIFLELIVVTLAVCWMPNQVRRIMAAAKPKHDWTKSYFRAYMILLPFSDTFFYLSSVVNPLLYNVSSQQFRSVFGQVLRCQLTLPHANQEKHLRAHVASTMDSTRSACRPLIFPASQRSSSSARANMVFLSTFHSEAKPESKPQELSCESPEPNSERKPANPATRNGFQEHEV</sequence>
<feature type="chain" id="PRO_0000379076" description="G-protein coupled receptor 39">
    <location>
        <begin position="1"/>
        <end position="454"/>
    </location>
</feature>
<feature type="topological domain" description="Extracellular" evidence="2">
    <location>
        <begin position="1"/>
        <end position="34"/>
    </location>
</feature>
<feature type="transmembrane region" description="Helical; Name=1" evidence="2">
    <location>
        <begin position="35"/>
        <end position="55"/>
    </location>
</feature>
<feature type="topological domain" description="Cytoplasmic" evidence="2">
    <location>
        <begin position="56"/>
        <end position="69"/>
    </location>
</feature>
<feature type="transmembrane region" description="Helical; Name=2" evidence="2">
    <location>
        <begin position="70"/>
        <end position="89"/>
    </location>
</feature>
<feature type="topological domain" description="Extracellular" evidence="2">
    <location>
        <begin position="90"/>
        <end position="109"/>
    </location>
</feature>
<feature type="transmembrane region" description="Helical; Name=3" evidence="2">
    <location>
        <begin position="110"/>
        <end position="131"/>
    </location>
</feature>
<feature type="topological domain" description="Cytoplasmic" evidence="2">
    <location>
        <begin position="132"/>
        <end position="151"/>
    </location>
</feature>
<feature type="transmembrane region" description="Helical; Name=4" evidence="2">
    <location>
        <begin position="152"/>
        <end position="172"/>
    </location>
</feature>
<feature type="topological domain" description="Extracellular" evidence="2">
    <location>
        <begin position="173"/>
        <end position="217"/>
    </location>
</feature>
<feature type="transmembrane region" description="Helical; Name=5" evidence="2">
    <location>
        <begin position="218"/>
        <end position="242"/>
    </location>
</feature>
<feature type="topological domain" description="Cytoplasmic" evidence="2">
    <location>
        <begin position="243"/>
        <end position="283"/>
    </location>
</feature>
<feature type="transmembrane region" description="Helical; Name=6" evidence="2">
    <location>
        <begin position="284"/>
        <end position="305"/>
    </location>
</feature>
<feature type="topological domain" description="Extracellular" evidence="2">
    <location>
        <begin position="306"/>
        <end position="323"/>
    </location>
</feature>
<feature type="transmembrane region" description="Helical; Name=7" evidence="2">
    <location>
        <begin position="324"/>
        <end position="344"/>
    </location>
</feature>
<feature type="topological domain" description="Cytoplasmic" evidence="2">
    <location>
        <begin position="345"/>
        <end position="454"/>
    </location>
</feature>
<feature type="region of interest" description="Disordered" evidence="6">
    <location>
        <begin position="415"/>
        <end position="454"/>
    </location>
</feature>
<feature type="binding site" evidence="1">
    <location>
        <position position="17"/>
    </location>
    <ligand>
        <name>Zn(2+)</name>
        <dbReference type="ChEBI" id="CHEBI:29105"/>
    </ligand>
</feature>
<feature type="binding site" evidence="1">
    <location>
        <position position="19"/>
    </location>
    <ligand>
        <name>Zn(2+)</name>
        <dbReference type="ChEBI" id="CHEBI:29105"/>
    </ligand>
</feature>
<feature type="modified residue" description="Phosphoserine" evidence="1">
    <location>
        <position position="397"/>
    </location>
</feature>
<feature type="glycosylation site" description="N-linked (GlcNAc...) asparagine" evidence="4">
    <location>
        <position position="192"/>
    </location>
</feature>
<feature type="glycosylation site" description="N-linked (GlcNAc...) asparagine" evidence="4">
    <location>
        <position position="206"/>
    </location>
</feature>
<feature type="glycosylation site" description="N-linked (GlcNAc...) asparagine" evidence="4">
    <location>
        <position position="212"/>
    </location>
</feature>
<feature type="disulfide bond" evidence="5">
    <location>
        <begin position="11"/>
        <end position="191"/>
    </location>
</feature>
<feature type="disulfide bond" evidence="5">
    <location>
        <begin position="108"/>
        <end position="210"/>
    </location>
</feature>
<accession>B4XF06</accession>
<name>GPR39_BOVIN</name>
<proteinExistence type="evidence at transcript level"/>
<protein>
    <recommendedName>
        <fullName>G-protein coupled receptor 39</fullName>
    </recommendedName>
</protein>
<dbReference type="EMBL" id="EU031892">
    <property type="protein sequence ID" value="ABV83042.1"/>
    <property type="molecule type" value="mRNA"/>
</dbReference>
<dbReference type="RefSeq" id="NP_001137216.1">
    <property type="nucleotide sequence ID" value="NM_001143744.1"/>
</dbReference>
<dbReference type="SMR" id="B4XF06"/>
<dbReference type="FunCoup" id="B4XF06">
    <property type="interactions" value="161"/>
</dbReference>
<dbReference type="STRING" id="9913.ENSBTAP00000053900"/>
<dbReference type="GlyCosmos" id="B4XF06">
    <property type="glycosylation" value="3 sites, No reported glycans"/>
</dbReference>
<dbReference type="GlyGen" id="B4XF06">
    <property type="glycosylation" value="3 sites"/>
</dbReference>
<dbReference type="PaxDb" id="9913-ENSBTAP00000053900"/>
<dbReference type="GeneID" id="100139476"/>
<dbReference type="KEGG" id="bta:100139476"/>
<dbReference type="CTD" id="2863"/>
<dbReference type="eggNOG" id="KOG3656">
    <property type="taxonomic scope" value="Eukaryota"/>
</dbReference>
<dbReference type="InParanoid" id="B4XF06"/>
<dbReference type="OrthoDB" id="6088609at2759"/>
<dbReference type="Proteomes" id="UP000009136">
    <property type="component" value="Unplaced"/>
</dbReference>
<dbReference type="GO" id="GO:0005886">
    <property type="term" value="C:plasma membrane"/>
    <property type="evidence" value="ECO:0007669"/>
    <property type="project" value="UniProtKB-SubCell"/>
</dbReference>
<dbReference type="GO" id="GO:0004930">
    <property type="term" value="F:G protein-coupled receptor activity"/>
    <property type="evidence" value="ECO:0000318"/>
    <property type="project" value="GO_Central"/>
</dbReference>
<dbReference type="GO" id="GO:0046872">
    <property type="term" value="F:metal ion binding"/>
    <property type="evidence" value="ECO:0007669"/>
    <property type="project" value="UniProtKB-KW"/>
</dbReference>
<dbReference type="GO" id="GO:0007186">
    <property type="term" value="P:G protein-coupled receptor signaling pathway"/>
    <property type="evidence" value="ECO:0000318"/>
    <property type="project" value="GO_Central"/>
</dbReference>
<dbReference type="CDD" id="cd15135">
    <property type="entry name" value="7tmA_GPR39"/>
    <property type="match status" value="1"/>
</dbReference>
<dbReference type="Gene3D" id="1.20.1070.10">
    <property type="entry name" value="Rhodopsin 7-helix transmembrane proteins"/>
    <property type="match status" value="1"/>
</dbReference>
<dbReference type="InterPro" id="IPR000276">
    <property type="entry name" value="GPCR_Rhodpsn"/>
</dbReference>
<dbReference type="InterPro" id="IPR017452">
    <property type="entry name" value="GPCR_Rhodpsn_7TM"/>
</dbReference>
<dbReference type="InterPro" id="IPR052676">
    <property type="entry name" value="Zinc-sensing_GPCR"/>
</dbReference>
<dbReference type="PANTHER" id="PTHR46752">
    <property type="entry name" value="G-PROTEIN COUPLED RECEPTOR 39"/>
    <property type="match status" value="1"/>
</dbReference>
<dbReference type="PANTHER" id="PTHR46752:SF1">
    <property type="entry name" value="G-PROTEIN COUPLED RECEPTOR 39"/>
    <property type="match status" value="1"/>
</dbReference>
<dbReference type="Pfam" id="PF00001">
    <property type="entry name" value="7tm_1"/>
    <property type="match status" value="1"/>
</dbReference>
<dbReference type="PRINTS" id="PR00237">
    <property type="entry name" value="GPCRRHODOPSN"/>
</dbReference>
<dbReference type="SUPFAM" id="SSF81321">
    <property type="entry name" value="Family A G protein-coupled receptor-like"/>
    <property type="match status" value="1"/>
</dbReference>
<dbReference type="PROSITE" id="PS00237">
    <property type="entry name" value="G_PROTEIN_RECEP_F1_1"/>
    <property type="match status" value="1"/>
</dbReference>
<dbReference type="PROSITE" id="PS50262">
    <property type="entry name" value="G_PROTEIN_RECEP_F1_2"/>
    <property type="match status" value="1"/>
</dbReference>
<organism>
    <name type="scientific">Bos taurus</name>
    <name type="common">Bovine</name>
    <dbReference type="NCBI Taxonomy" id="9913"/>
    <lineage>
        <taxon>Eukaryota</taxon>
        <taxon>Metazoa</taxon>
        <taxon>Chordata</taxon>
        <taxon>Craniata</taxon>
        <taxon>Vertebrata</taxon>
        <taxon>Euteleostomi</taxon>
        <taxon>Mammalia</taxon>
        <taxon>Eutheria</taxon>
        <taxon>Laurasiatheria</taxon>
        <taxon>Artiodactyla</taxon>
        <taxon>Ruminantia</taxon>
        <taxon>Pecora</taxon>
        <taxon>Bovidae</taxon>
        <taxon>Bovinae</taxon>
        <taxon>Bos</taxon>
    </lineage>
</organism>
<keyword id="KW-1003">Cell membrane</keyword>
<keyword id="KW-1015">Disulfide bond</keyword>
<keyword id="KW-0297">G-protein coupled receptor</keyword>
<keyword id="KW-0325">Glycoprotein</keyword>
<keyword id="KW-0472">Membrane</keyword>
<keyword id="KW-0479">Metal-binding</keyword>
<keyword id="KW-0597">Phosphoprotein</keyword>
<keyword id="KW-0675">Receptor</keyword>
<keyword id="KW-1185">Reference proteome</keyword>
<keyword id="KW-0807">Transducer</keyword>
<keyword id="KW-0812">Transmembrane</keyword>
<keyword id="KW-1133">Transmembrane helix</keyword>
<keyword id="KW-0862">Zinc</keyword>